<comment type="subcellular location">
    <subcellularLocation>
        <location evidence="1">Cytoplasm</location>
    </subcellularLocation>
</comment>
<comment type="similarity">
    <text evidence="1">Belongs to the TACO1 family.</text>
</comment>
<sequence length="244" mass="26572">MAGHSKWANIKHAKARQDAKRGKVFTKLIREITVAARLGGEDIDSNPRLRAVVDKAFAANMPKDTITRAIKRGAGSGAGDNLVEVRYEGYGPSGVAVMVDCLTDNKNRTVAEVRHAFSKCDGNLGTEGSVAYLFKQRGLITFPPNSDEEKIMEIALEVGAEDVTTNDDGSIDVTTLPEDFEKIRNAMKAADLNPSHAEVTVLASTEVGLDKDSAEQMLRLTEMLEDLDDVQNVYSNADYPEEVL</sequence>
<proteinExistence type="inferred from homology"/>
<keyword id="KW-0963">Cytoplasm</keyword>
<keyword id="KW-0238">DNA-binding</keyword>
<keyword id="KW-0804">Transcription</keyword>
<keyword id="KW-0805">Transcription regulation</keyword>
<evidence type="ECO:0000255" key="1">
    <source>
        <dbReference type="HAMAP-Rule" id="MF_00693"/>
    </source>
</evidence>
<protein>
    <recommendedName>
        <fullName evidence="1">Probable transcriptional regulatory protein CbuG_0446</fullName>
    </recommendedName>
</protein>
<name>Y446_COXB2</name>
<gene>
    <name type="ordered locus">CbuG_0446</name>
</gene>
<feature type="chain" id="PRO_1000132181" description="Probable transcriptional regulatory protein CbuG_0446">
    <location>
        <begin position="1"/>
        <end position="244"/>
    </location>
</feature>
<organism>
    <name type="scientific">Coxiella burnetii (strain CbuG_Q212)</name>
    <name type="common">Coxiella burnetii (strain Q212)</name>
    <dbReference type="NCBI Taxonomy" id="434923"/>
    <lineage>
        <taxon>Bacteria</taxon>
        <taxon>Pseudomonadati</taxon>
        <taxon>Pseudomonadota</taxon>
        <taxon>Gammaproteobacteria</taxon>
        <taxon>Legionellales</taxon>
        <taxon>Coxiellaceae</taxon>
        <taxon>Coxiella</taxon>
    </lineage>
</organism>
<accession>B6IYU5</accession>
<dbReference type="EMBL" id="CP001019">
    <property type="protein sequence ID" value="ACJ17873.1"/>
    <property type="molecule type" value="Genomic_DNA"/>
</dbReference>
<dbReference type="SMR" id="B6IYU5"/>
<dbReference type="KEGG" id="cbg:CbuG_0446"/>
<dbReference type="HOGENOM" id="CLU_062974_2_2_6"/>
<dbReference type="GO" id="GO:0005829">
    <property type="term" value="C:cytosol"/>
    <property type="evidence" value="ECO:0007669"/>
    <property type="project" value="TreeGrafter"/>
</dbReference>
<dbReference type="GO" id="GO:0003677">
    <property type="term" value="F:DNA binding"/>
    <property type="evidence" value="ECO:0007669"/>
    <property type="project" value="UniProtKB-UniRule"/>
</dbReference>
<dbReference type="GO" id="GO:0006355">
    <property type="term" value="P:regulation of DNA-templated transcription"/>
    <property type="evidence" value="ECO:0007669"/>
    <property type="project" value="UniProtKB-UniRule"/>
</dbReference>
<dbReference type="FunFam" id="1.10.10.200:FF:000001">
    <property type="entry name" value="Probable transcriptional regulatory protein YebC"/>
    <property type="match status" value="1"/>
</dbReference>
<dbReference type="FunFam" id="3.30.70.980:FF:000002">
    <property type="entry name" value="Probable transcriptional regulatory protein YebC"/>
    <property type="match status" value="1"/>
</dbReference>
<dbReference type="Gene3D" id="1.10.10.200">
    <property type="match status" value="1"/>
</dbReference>
<dbReference type="Gene3D" id="3.30.70.980">
    <property type="match status" value="2"/>
</dbReference>
<dbReference type="HAMAP" id="MF_00693">
    <property type="entry name" value="Transcrip_reg_TACO1"/>
    <property type="match status" value="1"/>
</dbReference>
<dbReference type="InterPro" id="IPR017856">
    <property type="entry name" value="Integrase-like_N"/>
</dbReference>
<dbReference type="InterPro" id="IPR048300">
    <property type="entry name" value="TACO1_YebC-like_2nd/3rd_dom"/>
</dbReference>
<dbReference type="InterPro" id="IPR049083">
    <property type="entry name" value="TACO1_YebC_N"/>
</dbReference>
<dbReference type="InterPro" id="IPR002876">
    <property type="entry name" value="Transcrip_reg_TACO1-like"/>
</dbReference>
<dbReference type="InterPro" id="IPR026564">
    <property type="entry name" value="Transcrip_reg_TACO1-like_dom3"/>
</dbReference>
<dbReference type="InterPro" id="IPR029072">
    <property type="entry name" value="YebC-like"/>
</dbReference>
<dbReference type="NCBIfam" id="NF001030">
    <property type="entry name" value="PRK00110.1"/>
    <property type="match status" value="1"/>
</dbReference>
<dbReference type="NCBIfam" id="NF009044">
    <property type="entry name" value="PRK12378.1"/>
    <property type="match status" value="1"/>
</dbReference>
<dbReference type="NCBIfam" id="TIGR01033">
    <property type="entry name" value="YebC/PmpR family DNA-binding transcriptional regulator"/>
    <property type="match status" value="1"/>
</dbReference>
<dbReference type="PANTHER" id="PTHR12532:SF6">
    <property type="entry name" value="TRANSCRIPTIONAL REGULATORY PROTEIN YEBC-RELATED"/>
    <property type="match status" value="1"/>
</dbReference>
<dbReference type="PANTHER" id="PTHR12532">
    <property type="entry name" value="TRANSLATIONAL ACTIVATOR OF CYTOCHROME C OXIDASE 1"/>
    <property type="match status" value="1"/>
</dbReference>
<dbReference type="Pfam" id="PF20772">
    <property type="entry name" value="TACO1_YebC_N"/>
    <property type="match status" value="1"/>
</dbReference>
<dbReference type="Pfam" id="PF01709">
    <property type="entry name" value="Transcrip_reg"/>
    <property type="match status" value="1"/>
</dbReference>
<dbReference type="SUPFAM" id="SSF75625">
    <property type="entry name" value="YebC-like"/>
    <property type="match status" value="1"/>
</dbReference>
<reference key="1">
    <citation type="journal article" date="2009" name="Infect. Immun.">
        <title>Comparative genomics reveal extensive transposon-mediated genomic plasticity and diversity among potential effector proteins within the genus Coxiella.</title>
        <authorList>
            <person name="Beare P.A."/>
            <person name="Unsworth N."/>
            <person name="Andoh M."/>
            <person name="Voth D.E."/>
            <person name="Omsland A."/>
            <person name="Gilk S.D."/>
            <person name="Williams K.P."/>
            <person name="Sobral B.W."/>
            <person name="Kupko J.J. III"/>
            <person name="Porcella S.F."/>
            <person name="Samuel J.E."/>
            <person name="Heinzen R.A."/>
        </authorList>
    </citation>
    <scope>NUCLEOTIDE SEQUENCE [LARGE SCALE GENOMIC DNA]</scope>
    <source>
        <strain>CbuG_Q212</strain>
    </source>
</reference>